<keyword id="KW-0175">Coiled coil</keyword>
<keyword id="KW-0472">Membrane</keyword>
<keyword id="KW-0539">Nucleus</keyword>
<keyword id="KW-0597">Phosphoprotein</keyword>
<keyword id="KW-1185">Reference proteome</keyword>
<keyword id="KW-0677">Repeat</keyword>
<dbReference type="EMBL" id="AC002130">
    <property type="protein sequence ID" value="AAG00257.1"/>
    <property type="status" value="ALT_SEQ"/>
    <property type="molecule type" value="Genomic_DNA"/>
</dbReference>
<dbReference type="EMBL" id="CP002684">
    <property type="protein sequence ID" value="AEE34615.1"/>
    <property type="molecule type" value="Genomic_DNA"/>
</dbReference>
<dbReference type="EMBL" id="AK230454">
    <property type="protein sequence ID" value="BAF02250.1"/>
    <property type="molecule type" value="mRNA"/>
</dbReference>
<dbReference type="EMBL" id="AK117144">
    <property type="protein sequence ID" value="BAC41822.1"/>
    <property type="status" value="ALT_INIT"/>
    <property type="molecule type" value="mRNA"/>
</dbReference>
<dbReference type="RefSeq" id="NP_176892.1">
    <property type="nucleotide sequence ID" value="NM_105392.5"/>
</dbReference>
<dbReference type="SMR" id="F4HRT5"/>
<dbReference type="FunCoup" id="F4HRT5">
    <property type="interactions" value="1329"/>
</dbReference>
<dbReference type="STRING" id="3702.F4HRT5"/>
<dbReference type="GlyGen" id="F4HRT5">
    <property type="glycosylation" value="1 site"/>
</dbReference>
<dbReference type="iPTMnet" id="F4HRT5"/>
<dbReference type="PaxDb" id="3702-AT1G67230.1"/>
<dbReference type="ProteomicsDB" id="222646"/>
<dbReference type="EnsemblPlants" id="AT1G67230.1">
    <property type="protein sequence ID" value="AT1G67230.1"/>
    <property type="gene ID" value="AT1G67230"/>
</dbReference>
<dbReference type="GeneID" id="843043"/>
<dbReference type="Gramene" id="AT1G67230.1">
    <property type="protein sequence ID" value="AT1G67230.1"/>
    <property type="gene ID" value="AT1G67230"/>
</dbReference>
<dbReference type="KEGG" id="ath:AT1G67230"/>
<dbReference type="Araport" id="AT1G67230"/>
<dbReference type="TAIR" id="AT1G67230">
    <property type="gene designation" value="LINC1"/>
</dbReference>
<dbReference type="eggNOG" id="ENOG502QUGA">
    <property type="taxonomic scope" value="Eukaryota"/>
</dbReference>
<dbReference type="HOGENOM" id="CLU_004241_0_0_1"/>
<dbReference type="InParanoid" id="F4HRT5"/>
<dbReference type="OMA" id="QEAHEST"/>
<dbReference type="PRO" id="PR:F4HRT5"/>
<dbReference type="Proteomes" id="UP000006548">
    <property type="component" value="Chromosome 1"/>
</dbReference>
<dbReference type="ExpressionAtlas" id="F4HRT5">
    <property type="expression patterns" value="baseline and differential"/>
</dbReference>
<dbReference type="GO" id="GO:0000785">
    <property type="term" value="C:chromatin"/>
    <property type="evidence" value="ECO:0000314"/>
    <property type="project" value="UniProtKB"/>
</dbReference>
<dbReference type="GO" id="GO:0005739">
    <property type="term" value="C:mitochondrion"/>
    <property type="evidence" value="ECO:0007005"/>
    <property type="project" value="TAIR"/>
</dbReference>
<dbReference type="GO" id="GO:0005635">
    <property type="term" value="C:nuclear envelope"/>
    <property type="evidence" value="ECO:0000314"/>
    <property type="project" value="UniProtKB"/>
</dbReference>
<dbReference type="GO" id="GO:0005652">
    <property type="term" value="C:nuclear lamina"/>
    <property type="evidence" value="ECO:0000314"/>
    <property type="project" value="TAIR"/>
</dbReference>
<dbReference type="GO" id="GO:0031965">
    <property type="term" value="C:nuclear membrane"/>
    <property type="evidence" value="ECO:0007669"/>
    <property type="project" value="UniProtKB-SubCell"/>
</dbReference>
<dbReference type="GO" id="GO:0034399">
    <property type="term" value="C:nuclear periphery"/>
    <property type="evidence" value="ECO:0000314"/>
    <property type="project" value="UniProtKB"/>
</dbReference>
<dbReference type="GO" id="GO:0005654">
    <property type="term" value="C:nucleoplasm"/>
    <property type="evidence" value="ECO:0000314"/>
    <property type="project" value="UniProtKB"/>
</dbReference>
<dbReference type="GO" id="GO:0005634">
    <property type="term" value="C:nucleus"/>
    <property type="evidence" value="ECO:0000314"/>
    <property type="project" value="TAIR"/>
</dbReference>
<dbReference type="GO" id="GO:0006997">
    <property type="term" value="P:nucleus organization"/>
    <property type="evidence" value="ECO:0000315"/>
    <property type="project" value="UniProtKB"/>
</dbReference>
<dbReference type="GO" id="GO:0097298">
    <property type="term" value="P:regulation of nucleus size"/>
    <property type="evidence" value="ECO:0000315"/>
    <property type="project" value="UniProtKB"/>
</dbReference>
<dbReference type="InterPro" id="IPR040418">
    <property type="entry name" value="CRWN"/>
</dbReference>
<dbReference type="PANTHER" id="PTHR31908:SF11">
    <property type="entry name" value="PROTEIN CROWDED NUCLEI 1"/>
    <property type="match status" value="1"/>
</dbReference>
<dbReference type="PANTHER" id="PTHR31908">
    <property type="entry name" value="PROTEIN CROWDED NUCLEI 4"/>
    <property type="match status" value="1"/>
</dbReference>
<organism evidence="16">
    <name type="scientific">Arabidopsis thaliana</name>
    <name type="common">Mouse-ear cress</name>
    <dbReference type="NCBI Taxonomy" id="3702"/>
    <lineage>
        <taxon>Eukaryota</taxon>
        <taxon>Viridiplantae</taxon>
        <taxon>Streptophyta</taxon>
        <taxon>Embryophyta</taxon>
        <taxon>Tracheophyta</taxon>
        <taxon>Spermatophyta</taxon>
        <taxon>Magnoliopsida</taxon>
        <taxon>eudicotyledons</taxon>
        <taxon>Gunneridae</taxon>
        <taxon>Pentapetalae</taxon>
        <taxon>rosids</taxon>
        <taxon>malvids</taxon>
        <taxon>Brassicales</taxon>
        <taxon>Brassicaceae</taxon>
        <taxon>Camelineae</taxon>
        <taxon>Arabidopsis</taxon>
    </lineage>
</organism>
<feature type="chain" id="PRO_0000432819" description="Protein CROWDED NUCLEI 1">
    <location>
        <begin position="1"/>
        <end position="1132"/>
    </location>
</feature>
<feature type="region of interest" description="Disordered" evidence="4">
    <location>
        <begin position="1"/>
        <end position="31"/>
    </location>
</feature>
<feature type="region of interest" description="Disordered" evidence="4">
    <location>
        <begin position="849"/>
        <end position="871"/>
    </location>
</feature>
<feature type="region of interest" description="Disordered" evidence="4">
    <location>
        <begin position="883"/>
        <end position="909"/>
    </location>
</feature>
<feature type="region of interest" description="Disordered" evidence="4">
    <location>
        <begin position="924"/>
        <end position="1039"/>
    </location>
</feature>
<feature type="region of interest" description="Disordered" evidence="4">
    <location>
        <begin position="1061"/>
        <end position="1132"/>
    </location>
</feature>
<feature type="coiled-coil region" evidence="2">
    <location>
        <begin position="73"/>
        <end position="714"/>
    </location>
</feature>
<feature type="short sequence motif" description="Nuclear localization signal 1" evidence="3">
    <location>
        <begin position="379"/>
        <end position="386"/>
    </location>
</feature>
<feature type="short sequence motif" description="Nuclear localization signal 2" evidence="3">
    <location>
        <begin position="693"/>
        <end position="700"/>
    </location>
</feature>
<feature type="compositionally biased region" description="Polar residues" evidence="4">
    <location>
        <begin position="10"/>
        <end position="28"/>
    </location>
</feature>
<feature type="compositionally biased region" description="Basic and acidic residues" evidence="4">
    <location>
        <begin position="849"/>
        <end position="859"/>
    </location>
</feature>
<feature type="compositionally biased region" description="Polar residues" evidence="4">
    <location>
        <begin position="861"/>
        <end position="871"/>
    </location>
</feature>
<feature type="compositionally biased region" description="Basic residues" evidence="4">
    <location>
        <begin position="895"/>
        <end position="907"/>
    </location>
</feature>
<feature type="compositionally biased region" description="Basic and acidic residues" evidence="4">
    <location>
        <begin position="1095"/>
        <end position="1105"/>
    </location>
</feature>
<feature type="modified residue" description="Phosphoserine" evidence="17">
    <location>
        <position position="774"/>
    </location>
</feature>
<feature type="modified residue" description="Phosphoserine" evidence="18">
    <location>
        <position position="803"/>
    </location>
</feature>
<feature type="modified residue" description="Phosphoserine" evidence="17 18">
    <location>
        <position position="865"/>
    </location>
</feature>
<feature type="modified residue" description="Phosphoserine" evidence="19">
    <location>
        <position position="883"/>
    </location>
</feature>
<feature type="modified residue" description="Phosphoserine" evidence="17 18 19">
    <location>
        <position position="908"/>
    </location>
</feature>
<feature type="modified residue" description="Phosphoserine" evidence="17">
    <location>
        <position position="1093"/>
    </location>
</feature>
<feature type="modified residue" description="Phosphoserine" evidence="17">
    <location>
        <position position="1105"/>
    </location>
</feature>
<feature type="modified residue" description="Phosphoserine" evidence="17">
    <location>
        <position position="1112"/>
    </location>
</feature>
<feature type="sequence conflict" description="In Ref. 4; BAC41822." evidence="13" ref="4">
    <original>E</original>
    <variation>G</variation>
    <location>
        <position position="717"/>
    </location>
</feature>
<evidence type="ECO:0000250" key="1">
    <source>
        <dbReference type="UniProtKB" id="Q6ZWR6"/>
    </source>
</evidence>
<evidence type="ECO:0000255" key="2"/>
<evidence type="ECO:0000255" key="3">
    <source>
        <dbReference type="PROSITE-ProRule" id="PRU00768"/>
    </source>
</evidence>
<evidence type="ECO:0000256" key="4">
    <source>
        <dbReference type="SAM" id="MobiDB-lite"/>
    </source>
</evidence>
<evidence type="ECO:0000269" key="5">
    <source>
    </source>
</evidence>
<evidence type="ECO:0000269" key="6">
    <source>
    </source>
</evidence>
<evidence type="ECO:0000269" key="7">
    <source>
    </source>
</evidence>
<evidence type="ECO:0000269" key="8">
    <source>
    </source>
</evidence>
<evidence type="ECO:0000269" key="9">
    <source>
    </source>
</evidence>
<evidence type="ECO:0000303" key="10">
    <source>
    </source>
</evidence>
<evidence type="ECO:0000303" key="11">
    <source>
    </source>
</evidence>
<evidence type="ECO:0000303" key="12">
    <source>
    </source>
</evidence>
<evidence type="ECO:0000305" key="13"/>
<evidence type="ECO:0000312" key="14">
    <source>
        <dbReference type="Araport" id="AT1G67230"/>
    </source>
</evidence>
<evidence type="ECO:0000312" key="15">
    <source>
        <dbReference type="EMBL" id="AAG00257.1"/>
    </source>
</evidence>
<evidence type="ECO:0000312" key="16">
    <source>
        <dbReference type="Proteomes" id="UP000006548"/>
    </source>
</evidence>
<evidence type="ECO:0007744" key="17">
    <source>
    </source>
</evidence>
<evidence type="ECO:0007744" key="18">
    <source>
    </source>
</evidence>
<evidence type="ECO:0007744" key="19">
    <source>
    </source>
</evidence>
<proteinExistence type="evidence at protein level"/>
<name>CRWN1_ARATH</name>
<accession>F4HRT5</accession>
<accession>Q0WKV7</accession>
<accession>Q8GZ88</accession>
<accession>Q9FYH0</accession>
<protein>
    <recommendedName>
        <fullName evidence="11">Protein CROWDED NUCLEI 1</fullName>
    </recommendedName>
    <alternativeName>
        <fullName evidence="12">Protein KAKU2</fullName>
    </alternativeName>
    <alternativeName>
        <fullName evidence="10">Protein LITTLE NUCLEI 1</fullName>
    </alternativeName>
</protein>
<sequence>MSTPLKVWQRWSTPTKATNPDSNGSSHGTGLDMVTPVSGRVSEIQFDDPRILPEKISELEKELFEYQHSMGLLLIEKKEWSSQYEALQQAFEEVNECLKQERNAHLIAIADVEKREEGLRKALGIEKQCALDLEKALKELRAENAEIKFTADSKLTEANALVRSVEEKSLEVEAKLRAVDAKLAEVSRKSSDVERKAKEVEARESSLQRERFSYIAEREADEATLSKQREDLREWERKLQEGEERVAKSQMIVKQREDRANESDKIIKQKGKELEEAQKKIDAANLAVKKLEDDVSSRIKDLALREQETDVLKKSIETKARELQALQEKLEAREKMAVQQLVDEHQAKLDSTQREFELEMEQKRKSIDDSLKSKVAEVEKREAEWKHMEEKVAKREQALDRKLEKHKEKENDFDLRLKGISGREKALKSEEKALETEKKKLLEDKEIILNLKALVEKVSGENQAQLSEINKEKDELRVTEEERSEYLRLQTELKEQIEKCRSQQELLQKEAEDLKAQRESFEKEWEELDERKAKIGNELKNITDQKEKLERHIHLEEERLKKEKQAANENMERELETLEVAKASFAETMEYERSMLSKKAESERSQLLHDIEMRKRKLESDMQTILEEKERELQAKKKLFEEEREKELSNINYLRDVARREMMDMQNERQRIEKEKLEVDSSKNHLEEQQTEIRKDVDDLVALTKKLKEQREQFISERSRFLSSMESNRNCSRCGELLSELVLPEIDNLEMPNMSKLANILDNEAPRQEMRDISPTAAGLGLPVTGGKVSWFRKCTSKMLKLSPIKMTEPSVTWNLADQEPQSTEQANVGGPSTTVQAATTYSFDVQKAESETGTKEVEVTNVNSDGDQSDINSKAQEVAADSLSNLDVDGQSRMKGKGKARTRRTRSVKDVVDDAKALYGESINLYEPNDSTENVDDSTKASTGETGRSDKAISKNGRKRGRVGSLRTCTTEQDGNESDGKSDSVTGGAHQRKRRQKVASEQQGEVVGQRYNLRRPRRVTGEPALSKKNEDIGGVQQEEGIHCTQATATASVGVAVSDNGVSTNVVQHEATADSEDTDAGSPKRTDESEAMSEDVNKTPLRADSDGEDDESDAEHPGKVSIGKKLWTFLTT</sequence>
<reference key="1">
    <citation type="journal article" date="2000" name="Nature">
        <title>Sequence and analysis of chromosome 1 of the plant Arabidopsis thaliana.</title>
        <authorList>
            <person name="Theologis A."/>
            <person name="Ecker J.R."/>
            <person name="Palm C.J."/>
            <person name="Federspiel N.A."/>
            <person name="Kaul S."/>
            <person name="White O."/>
            <person name="Alonso J."/>
            <person name="Altafi H."/>
            <person name="Araujo R."/>
            <person name="Bowman C.L."/>
            <person name="Brooks S.Y."/>
            <person name="Buehler E."/>
            <person name="Chan A."/>
            <person name="Chao Q."/>
            <person name="Chen H."/>
            <person name="Cheuk R.F."/>
            <person name="Chin C.W."/>
            <person name="Chung M.K."/>
            <person name="Conn L."/>
            <person name="Conway A.B."/>
            <person name="Conway A.R."/>
            <person name="Creasy T.H."/>
            <person name="Dewar K."/>
            <person name="Dunn P."/>
            <person name="Etgu P."/>
            <person name="Feldblyum T.V."/>
            <person name="Feng J.-D."/>
            <person name="Fong B."/>
            <person name="Fujii C.Y."/>
            <person name="Gill J.E."/>
            <person name="Goldsmith A.D."/>
            <person name="Haas B."/>
            <person name="Hansen N.F."/>
            <person name="Hughes B."/>
            <person name="Huizar L."/>
            <person name="Hunter J.L."/>
            <person name="Jenkins J."/>
            <person name="Johnson-Hopson C."/>
            <person name="Khan S."/>
            <person name="Khaykin E."/>
            <person name="Kim C.J."/>
            <person name="Koo H.L."/>
            <person name="Kremenetskaia I."/>
            <person name="Kurtz D.B."/>
            <person name="Kwan A."/>
            <person name="Lam B."/>
            <person name="Langin-Hooper S."/>
            <person name="Lee A."/>
            <person name="Lee J.M."/>
            <person name="Lenz C.A."/>
            <person name="Li J.H."/>
            <person name="Li Y.-P."/>
            <person name="Lin X."/>
            <person name="Liu S.X."/>
            <person name="Liu Z.A."/>
            <person name="Luros J.S."/>
            <person name="Maiti R."/>
            <person name="Marziali A."/>
            <person name="Militscher J."/>
            <person name="Miranda M."/>
            <person name="Nguyen M."/>
            <person name="Nierman W.C."/>
            <person name="Osborne B.I."/>
            <person name="Pai G."/>
            <person name="Peterson J."/>
            <person name="Pham P.K."/>
            <person name="Rizzo M."/>
            <person name="Rooney T."/>
            <person name="Rowley D."/>
            <person name="Sakano H."/>
            <person name="Salzberg S.L."/>
            <person name="Schwartz J.R."/>
            <person name="Shinn P."/>
            <person name="Southwick A.M."/>
            <person name="Sun H."/>
            <person name="Tallon L.J."/>
            <person name="Tambunga G."/>
            <person name="Toriumi M.J."/>
            <person name="Town C.D."/>
            <person name="Utterback T."/>
            <person name="Van Aken S."/>
            <person name="Vaysberg M."/>
            <person name="Vysotskaia V.S."/>
            <person name="Walker M."/>
            <person name="Wu D."/>
            <person name="Yu G."/>
            <person name="Fraser C.M."/>
            <person name="Venter J.C."/>
            <person name="Davis R.W."/>
        </authorList>
    </citation>
    <scope>NUCLEOTIDE SEQUENCE [LARGE SCALE GENOMIC DNA]</scope>
    <source>
        <strain>cv. Columbia</strain>
    </source>
</reference>
<reference key="2">
    <citation type="journal article" date="2017" name="Plant J.">
        <title>Araport11: a complete reannotation of the Arabidopsis thaliana reference genome.</title>
        <authorList>
            <person name="Cheng C.Y."/>
            <person name="Krishnakumar V."/>
            <person name="Chan A.P."/>
            <person name="Thibaud-Nissen F."/>
            <person name="Schobel S."/>
            <person name="Town C.D."/>
        </authorList>
    </citation>
    <scope>GENOME REANNOTATION</scope>
    <source>
        <strain>cv. Columbia</strain>
    </source>
</reference>
<reference key="3">
    <citation type="submission" date="2006-07" db="EMBL/GenBank/DDBJ databases">
        <title>Large-scale analysis of RIKEN Arabidopsis full-length (RAFL) cDNAs.</title>
        <authorList>
            <person name="Totoki Y."/>
            <person name="Seki M."/>
            <person name="Ishida J."/>
            <person name="Nakajima M."/>
            <person name="Enju A."/>
            <person name="Kamiya A."/>
            <person name="Narusaka M."/>
            <person name="Shin-i T."/>
            <person name="Nakagawa M."/>
            <person name="Sakamoto N."/>
            <person name="Oishi K."/>
            <person name="Kohara Y."/>
            <person name="Kobayashi M."/>
            <person name="Toyoda A."/>
            <person name="Sakaki Y."/>
            <person name="Sakurai T."/>
            <person name="Iida K."/>
            <person name="Akiyama K."/>
            <person name="Satou M."/>
            <person name="Toyoda T."/>
            <person name="Konagaya A."/>
            <person name="Carninci P."/>
            <person name="Kawai J."/>
            <person name="Hayashizaki Y."/>
            <person name="Shinozaki K."/>
        </authorList>
    </citation>
    <scope>NUCLEOTIDE SEQUENCE [LARGE SCALE MRNA] OF 1-626</scope>
    <source>
        <strain>cv. Columbia</strain>
    </source>
</reference>
<reference key="4">
    <citation type="journal article" date="2002" name="Science">
        <title>Functional annotation of a full-length Arabidopsis cDNA collection.</title>
        <authorList>
            <person name="Seki M."/>
            <person name="Narusaka M."/>
            <person name="Kamiya A."/>
            <person name="Ishida J."/>
            <person name="Satou M."/>
            <person name="Sakurai T."/>
            <person name="Nakajima M."/>
            <person name="Enju A."/>
            <person name="Akiyama K."/>
            <person name="Oono Y."/>
            <person name="Muramatsu M."/>
            <person name="Hayashizaki Y."/>
            <person name="Kawai J."/>
            <person name="Carninci P."/>
            <person name="Itoh M."/>
            <person name="Ishii Y."/>
            <person name="Arakawa T."/>
            <person name="Shibata K."/>
            <person name="Shinagawa A."/>
            <person name="Shinozaki K."/>
        </authorList>
    </citation>
    <scope>NUCLEOTIDE SEQUENCE [LARGE SCALE MRNA] OF 630-1132</scope>
    <source>
        <strain>cv. Columbia</strain>
    </source>
</reference>
<reference key="5">
    <citation type="journal article" date="2007" name="Plant Cell">
        <title>LITTLE NUCLEI genes affecting nuclear morphology in Arabidopsis thaliana.</title>
        <authorList>
            <person name="Dittmer T.A."/>
            <person name="Stacey N.J."/>
            <person name="Sugimoto-Shirasu K."/>
            <person name="Richards E.J."/>
        </authorList>
    </citation>
    <scope>FUNCTION</scope>
    <scope>DISRUPTION PHENOTYPE</scope>
    <scope>SUBCELLULAR LOCATION</scope>
    <scope>GENE FAMILY</scope>
    <scope>NOMENCLATURE</scope>
    <source>
        <strain>cv. Columbia</strain>
    </source>
</reference>
<reference key="6">
    <citation type="journal article" date="2008" name="J. Proteome Res.">
        <title>Site-specific phosphorylation profiling of Arabidopsis proteins by mass spectrometry and peptide chip analysis.</title>
        <authorList>
            <person name="de la Fuente van Bentem S."/>
            <person name="Anrather D."/>
            <person name="Dohnal I."/>
            <person name="Roitinger E."/>
            <person name="Csaszar E."/>
            <person name="Joore J."/>
            <person name="Buijnink J."/>
            <person name="Carreri A."/>
            <person name="Forzani C."/>
            <person name="Lorkovic Z.J."/>
            <person name="Barta A."/>
            <person name="Lecourieux D."/>
            <person name="Verhounig A."/>
            <person name="Jonak C."/>
            <person name="Hirt H."/>
        </authorList>
    </citation>
    <scope>PHOSPHORYLATION [LARGE SCALE ANALYSIS] AT SER-774; SER-865; SER-908; SER-1093; SER-1105 AND SER-1112</scope>
    <scope>IDENTIFICATION BY MASS SPECTROMETRY [LARGE SCALE ANALYSIS]</scope>
    <source>
        <tissue>Root</tissue>
    </source>
</reference>
<reference key="7">
    <citation type="journal article" date="2009" name="J. Proteomics">
        <title>Phosphoproteomic analysis of nuclei-enriched fractions from Arabidopsis thaliana.</title>
        <authorList>
            <person name="Jones A.M.E."/>
            <person name="MacLean D."/>
            <person name="Studholme D.J."/>
            <person name="Serna-Sanz A."/>
            <person name="Andreasson E."/>
            <person name="Rathjen J.P."/>
            <person name="Peck S.C."/>
        </authorList>
    </citation>
    <scope>PHOSPHORYLATION [LARGE SCALE ANALYSIS] AT SER-803; SER-865 AND SER-908</scope>
    <scope>IDENTIFICATION BY MASS SPECTROMETRY [LARGE SCALE ANALYSIS]</scope>
    <source>
        <strain>cv. Columbia</strain>
    </source>
</reference>
<reference key="8">
    <citation type="journal article" date="2009" name="Plant Physiol.">
        <title>Large-scale Arabidopsis phosphoproteome profiling reveals novel chloroplast kinase substrates and phosphorylation networks.</title>
        <authorList>
            <person name="Reiland S."/>
            <person name="Messerli G."/>
            <person name="Baerenfaller K."/>
            <person name="Gerrits B."/>
            <person name="Endler A."/>
            <person name="Grossmann J."/>
            <person name="Gruissem W."/>
            <person name="Baginsky S."/>
        </authorList>
    </citation>
    <scope>PHOSPHORYLATION [LARGE SCALE ANALYSIS] AT SER-883 AND SER-908</scope>
    <scope>IDENTIFICATION BY MASS SPECTROMETRY [LARGE SCALE ANALYSIS]</scope>
</reference>
<reference key="9">
    <citation type="journal article" date="2013" name="BMC Plant Biol.">
        <title>Arabidopsis CROWDED NUCLEI (CRWN) proteins are required for nuclear size control and heterochromatin organization.</title>
        <authorList>
            <person name="Wang H."/>
            <person name="Dittmer T.A."/>
            <person name="Richards E.J."/>
        </authorList>
    </citation>
    <scope>FUNCTION</scope>
    <scope>DISRUPTION PHENOTYPE</scope>
    <scope>GENE FAMILY</scope>
    <scope>NOMENCLATURE</scope>
    <source>
        <strain>cv. Columbia</strain>
    </source>
</reference>
<reference key="10">
    <citation type="journal article" date="2013" name="Plant Cell Physiol.">
        <title>LITTLE NUCLEI 1 and 4 regulate nuclear morphology in Arabidopsis thaliana.</title>
        <authorList>
            <person name="Sakamoto Y."/>
            <person name="Takagi S."/>
        </authorList>
    </citation>
    <scope>FUNCTION</scope>
    <scope>DISRUPTION PHENOTYPE</scope>
    <scope>SUBCELLULAR LOCATION</scope>
    <scope>TISSUE SPECIFICITY</scope>
    <scope>IDENTIFICATION BY MASS SPECTROMETRY</scope>
</reference>
<reference key="11">
    <citation type="journal article" date="2014" name="Plant Cell">
        <title>The novel nuclear envelope protein KAKU4 modulates nuclear morphology in Arabidopsis.</title>
        <authorList>
            <person name="Goto C."/>
            <person name="Tamura K."/>
            <person name="Fukao Y."/>
            <person name="Shimada T."/>
            <person name="Hara-Nishimura I."/>
        </authorList>
    </citation>
    <scope>FUNCTION</scope>
    <scope>DISRUPTION PHENOTYPE</scope>
    <scope>INTERACTION WITH KAKU4</scope>
</reference>
<reference key="12">
    <citation type="journal article" date="2014" name="PLoS ONE">
        <title>Evidence for LINC1-SUN associations at the plant nuclear periphery.</title>
        <authorList>
            <person name="Graumann K."/>
        </authorList>
    </citation>
    <scope>SUBCELLULAR LOCATION</scope>
    <scope>INTERACTION WITH SUN1 AND SUN2</scope>
</reference>
<reference key="13">
    <citation type="journal article" date="2015" name="J. Exp. Bot.">
        <title>The plant nuclear envelope as a multifunctional platform LINCed by SUN and KASH.</title>
        <authorList>
            <person name="Zhou X."/>
            <person name="Graumann K."/>
            <person name="Meier I."/>
        </authorList>
    </citation>
    <scope>REVIEW</scope>
</reference>
<gene>
    <name evidence="11" type="primary">CRWN1</name>
    <name evidence="12" type="synonym">KAKU2</name>
    <name evidence="10" type="synonym">LINC1</name>
    <name evidence="14" type="ordered locus">At1g67230</name>
    <name evidence="15" type="ORF">F1N21.5</name>
</gene>
<comment type="function">
    <text evidence="1 5 6 7 9">Component of SUN-protein-containing multivariate complexes also called LINC complexes which link the nucleoskeleton and cytoskeleton by providing versatile outer nuclear membrane attachment sites for cytoskeletal filaments (By similarity). Required for nucleus structure organization (e.g. size and shape) (PubMed:17873096, PubMed:23396599, PubMed:24308514, PubMed:24824484).</text>
</comment>
<comment type="subunit">
    <text evidence="8 9">Core component of the LINC complex which is composed of inner nuclear membrane SUN domain-containing proteins coupled to outer nuclear membrane WIP and WIT proteins. The LINC complex also involves nucleoskeletal proteins CRWN/LINC and possibly KAKU4 and the cytoskeletal myosin KAKU1. Interacts with SUN1 and SUN2 (PubMed:24667841). Binds to KAKU4 (PubMed:24824484).</text>
</comment>
<comment type="subcellular location">
    <subcellularLocation>
        <location evidence="5 6 8">Nucleus membrane</location>
        <topology evidence="5 6 8">Peripheral membrane protein</topology>
    </subcellularLocation>
    <subcellularLocation>
        <location evidence="5 8">Nucleus</location>
        <location evidence="5 8">Nucleoplasm</location>
    </subcellularLocation>
    <subcellularLocation>
        <location evidence="6">Nucleus lamina</location>
    </subcellularLocation>
    <text evidence="5 6 8">Recruited to the nucleus envelope (NE) by SUN proteins and is immobilised therein (PubMed:24667841). Mostly localized at the nuclear periphery and, to a lesser extent, in the nucleoplasm (PubMed:17873096). Localized on the condensing chromatin during prometaphase to anaphase, but transferred from the decondensing chromatin to the reassembling nuclear envelope during early telophase. Relocalized to the nuclear periphery during late telophase (PubMed:23396599).</text>
</comment>
<comment type="tissue specificity">
    <text evidence="6">Expressed at low levels in roots, leaves, flowers and flower stalks.</text>
</comment>
<comment type="disruption phenotype">
    <text evidence="5 6 7 9">Reduced nuclear size and altered nuclear morphology. In plants lacking both CRWN1 and CRWN2, moderate dwarf and leaf-curling phenotype associated with endoreplication and strongly reduced nuclear size. Plants lacking both CRWN1 and CRWN4 exhibit slightly smaller rosettes. Plants lacking both CRWN1 and CRWN2 or both CRWN1 and CRWN3 exhibit markedly smaller rosettes. Plants lacking CRWN1, CRWN2 and CRWN4 or CRWN1, CRWN3 and CRWN4 are extremely stunted and set few seed.</text>
</comment>
<comment type="similarity">
    <text evidence="13">Belongs to the CRWN family.</text>
</comment>
<comment type="sequence caution" evidence="13">
    <conflict type="erroneous gene model prediction">
        <sequence resource="EMBL-CDS" id="AAG00257"/>
    </conflict>
</comment>
<comment type="sequence caution" evidence="13">
    <conflict type="erroneous initiation">
        <sequence resource="EMBL-CDS" id="BAC41822"/>
    </conflict>
    <text>Truncated N-terminus.</text>
</comment>